<evidence type="ECO:0000250" key="1"/>
<evidence type="ECO:0000305" key="2"/>
<dbReference type="EMBL" id="DP000009">
    <property type="protein sequence ID" value="ABF93868.1"/>
    <property type="molecule type" value="Genomic_DNA"/>
</dbReference>
<dbReference type="EMBL" id="AP008209">
    <property type="protein sequence ID" value="BAF10816.1"/>
    <property type="molecule type" value="Genomic_DNA"/>
</dbReference>
<dbReference type="EMBL" id="AP014959">
    <property type="protein sequence ID" value="BAS82196.1"/>
    <property type="molecule type" value="Genomic_DNA"/>
</dbReference>
<dbReference type="EMBL" id="AK060148">
    <property type="protein sequence ID" value="BAG87345.1"/>
    <property type="molecule type" value="mRNA"/>
</dbReference>
<dbReference type="RefSeq" id="XP_015632202.1">
    <property type="nucleotide sequence ID" value="XM_015776716.1"/>
</dbReference>
<dbReference type="RefSeq" id="XP_015632203.1">
    <property type="nucleotide sequence ID" value="XM_015776717.1"/>
</dbReference>
<dbReference type="SMR" id="Q10S27"/>
<dbReference type="FunCoup" id="Q10S27">
    <property type="interactions" value="2629"/>
</dbReference>
<dbReference type="STRING" id="39947.Q10S27"/>
<dbReference type="iPTMnet" id="Q10S27"/>
<dbReference type="PaxDb" id="39947-Q10S27"/>
<dbReference type="EnsemblPlants" id="Os03t0137500-01">
    <property type="protein sequence ID" value="Os03t0137500-01"/>
    <property type="gene ID" value="Os03g0137500"/>
</dbReference>
<dbReference type="EnsemblPlants" id="Os03t0137500-03">
    <property type="protein sequence ID" value="Os03t0137500-03"/>
    <property type="gene ID" value="Os03g0137500"/>
</dbReference>
<dbReference type="Gramene" id="Os03t0137500-01">
    <property type="protein sequence ID" value="Os03t0137500-01"/>
    <property type="gene ID" value="Os03g0137500"/>
</dbReference>
<dbReference type="Gramene" id="Os03t0137500-03">
    <property type="protein sequence ID" value="Os03t0137500-03"/>
    <property type="gene ID" value="Os03g0137500"/>
</dbReference>
<dbReference type="KEGG" id="dosa:Os03g0137500"/>
<dbReference type="eggNOG" id="KOG3126">
    <property type="taxonomic scope" value="Eukaryota"/>
</dbReference>
<dbReference type="HOGENOM" id="CLU_069937_0_0_1"/>
<dbReference type="InParanoid" id="Q10S27"/>
<dbReference type="OMA" id="FKQPAFH"/>
<dbReference type="OrthoDB" id="7827681at2759"/>
<dbReference type="Proteomes" id="UP000000763">
    <property type="component" value="Chromosome 3"/>
</dbReference>
<dbReference type="Proteomes" id="UP000059680">
    <property type="component" value="Chromosome 3"/>
</dbReference>
<dbReference type="ExpressionAtlas" id="Q10S27">
    <property type="expression patterns" value="baseline and differential"/>
</dbReference>
<dbReference type="GO" id="GO:0005741">
    <property type="term" value="C:mitochondrial outer membrane"/>
    <property type="evidence" value="ECO:0000318"/>
    <property type="project" value="GO_Central"/>
</dbReference>
<dbReference type="GO" id="GO:0046930">
    <property type="term" value="C:pore complex"/>
    <property type="evidence" value="ECO:0007669"/>
    <property type="project" value="UniProtKB-KW"/>
</dbReference>
<dbReference type="GO" id="GO:0015288">
    <property type="term" value="F:porin activity"/>
    <property type="evidence" value="ECO:0007669"/>
    <property type="project" value="UniProtKB-KW"/>
</dbReference>
<dbReference type="GO" id="GO:0008308">
    <property type="term" value="F:voltage-gated monoatomic anion channel activity"/>
    <property type="evidence" value="ECO:0000318"/>
    <property type="project" value="GO_Central"/>
</dbReference>
<dbReference type="GO" id="GO:0009617">
    <property type="term" value="P:response to bacterium"/>
    <property type="evidence" value="ECO:0007669"/>
    <property type="project" value="EnsemblPlants"/>
</dbReference>
<dbReference type="CDD" id="cd07306">
    <property type="entry name" value="Porin3_VDAC"/>
    <property type="match status" value="1"/>
</dbReference>
<dbReference type="FunFam" id="2.40.160.10:FF:000003">
    <property type="entry name" value="Outer mitochondrial membrane protein porin"/>
    <property type="match status" value="1"/>
</dbReference>
<dbReference type="Gene3D" id="2.40.160.10">
    <property type="entry name" value="Porin"/>
    <property type="match status" value="1"/>
</dbReference>
<dbReference type="InterPro" id="IPR023614">
    <property type="entry name" value="Porin_dom_sf"/>
</dbReference>
<dbReference type="InterPro" id="IPR001925">
    <property type="entry name" value="Porin_Euk"/>
</dbReference>
<dbReference type="InterPro" id="IPR027246">
    <property type="entry name" value="Porin_Euk/Tom40"/>
</dbReference>
<dbReference type="PANTHER" id="PTHR11743:SF27">
    <property type="entry name" value="MITOCHONDRIAL OUTER MEMBRANE PROTEIN PORIN 4"/>
    <property type="match status" value="1"/>
</dbReference>
<dbReference type="PANTHER" id="PTHR11743">
    <property type="entry name" value="VOLTAGE-DEPENDENT ANION-SELECTIVE CHANNEL"/>
    <property type="match status" value="1"/>
</dbReference>
<dbReference type="Pfam" id="PF01459">
    <property type="entry name" value="Porin_3"/>
    <property type="match status" value="1"/>
</dbReference>
<keyword id="KW-0406">Ion transport</keyword>
<keyword id="KW-0472">Membrane</keyword>
<keyword id="KW-0496">Mitochondrion</keyword>
<keyword id="KW-1000">Mitochondrion outer membrane</keyword>
<keyword id="KW-0626">Porin</keyword>
<keyword id="KW-1185">Reference proteome</keyword>
<keyword id="KW-0812">Transmembrane</keyword>
<keyword id="KW-1134">Transmembrane beta strand</keyword>
<keyword id="KW-0813">Transport</keyword>
<accession>Q10S27</accession>
<accession>A0A0P0VSU6</accession>
<name>VDAC6_ORYSJ</name>
<feature type="initiator methionine" description="Removed" evidence="1">
    <location>
        <position position="1"/>
    </location>
</feature>
<feature type="chain" id="PRO_0000414089" description="Mitochondrial outer membrane protein porin 6">
    <location>
        <begin position="2"/>
        <end position="276"/>
    </location>
</feature>
<organism>
    <name type="scientific">Oryza sativa subsp. japonica</name>
    <name type="common">Rice</name>
    <dbReference type="NCBI Taxonomy" id="39947"/>
    <lineage>
        <taxon>Eukaryota</taxon>
        <taxon>Viridiplantae</taxon>
        <taxon>Streptophyta</taxon>
        <taxon>Embryophyta</taxon>
        <taxon>Tracheophyta</taxon>
        <taxon>Spermatophyta</taxon>
        <taxon>Magnoliopsida</taxon>
        <taxon>Liliopsida</taxon>
        <taxon>Poales</taxon>
        <taxon>Poaceae</taxon>
        <taxon>BOP clade</taxon>
        <taxon>Oryzoideae</taxon>
        <taxon>Oryzeae</taxon>
        <taxon>Oryzinae</taxon>
        <taxon>Oryza</taxon>
        <taxon>Oryza sativa</taxon>
    </lineage>
</organism>
<protein>
    <recommendedName>
        <fullName>Mitochondrial outer membrane protein porin 6</fullName>
    </recommendedName>
    <alternativeName>
        <fullName>Voltage-dependent anion-selective channel protein 6</fullName>
        <shortName>OsVDAC6</shortName>
    </alternativeName>
</protein>
<gene>
    <name type="primary">VDAC6</name>
    <name type="ordered locus">Os03g0137500</name>
    <name type="ordered locus">LOC_Os03g04460</name>
</gene>
<comment type="function">
    <text evidence="1">Forms a channel through the mitochondrial outer membrane that allows diffusion of small hydrophilic molecules. The channel adopts an open conformation at low or zero membrane potential and a closed conformation at potentials above 30-40 mV. The open state has a weak anion selectivity whereas the closed state is cation-selective (By similarity).</text>
</comment>
<comment type="subcellular location">
    <subcellularLocation>
        <location evidence="1">Mitochondrion outer membrane</location>
    </subcellularLocation>
</comment>
<comment type="domain">
    <text>Consists mainly of membrane-spanning sided beta-sheets.</text>
</comment>
<comment type="similarity">
    <text evidence="2">Belongs to the eukaryotic mitochondrial porin (TC 1.B.8.1) family.</text>
</comment>
<reference key="1">
    <citation type="journal article" date="2005" name="Genome Res.">
        <title>Sequence, annotation, and analysis of synteny between rice chromosome 3 and diverged grass species.</title>
        <authorList>
            <consortium name="The rice chromosome 3 sequencing consortium"/>
            <person name="Buell C.R."/>
            <person name="Yuan Q."/>
            <person name="Ouyang S."/>
            <person name="Liu J."/>
            <person name="Zhu W."/>
            <person name="Wang A."/>
            <person name="Maiti R."/>
            <person name="Haas B."/>
            <person name="Wortman J."/>
            <person name="Pertea M."/>
            <person name="Jones K.M."/>
            <person name="Kim M."/>
            <person name="Overton L."/>
            <person name="Tsitrin T."/>
            <person name="Fadrosh D."/>
            <person name="Bera J."/>
            <person name="Weaver B."/>
            <person name="Jin S."/>
            <person name="Johri S."/>
            <person name="Reardon M."/>
            <person name="Webb K."/>
            <person name="Hill J."/>
            <person name="Moffat K."/>
            <person name="Tallon L."/>
            <person name="Van Aken S."/>
            <person name="Lewis M."/>
            <person name="Utterback T."/>
            <person name="Feldblyum T."/>
            <person name="Zismann V."/>
            <person name="Iobst S."/>
            <person name="Hsiao J."/>
            <person name="de Vazeille A.R."/>
            <person name="Salzberg S.L."/>
            <person name="White O."/>
            <person name="Fraser C.M."/>
            <person name="Yu Y."/>
            <person name="Kim H."/>
            <person name="Rambo T."/>
            <person name="Currie J."/>
            <person name="Collura K."/>
            <person name="Kernodle-Thompson S."/>
            <person name="Wei F."/>
            <person name="Kudrna K."/>
            <person name="Ammiraju J.S.S."/>
            <person name="Luo M."/>
            <person name="Goicoechea J.L."/>
            <person name="Wing R.A."/>
            <person name="Henry D."/>
            <person name="Oates R."/>
            <person name="Palmer M."/>
            <person name="Pries G."/>
            <person name="Saski C."/>
            <person name="Simmons J."/>
            <person name="Soderlund C."/>
            <person name="Nelson W."/>
            <person name="de la Bastide M."/>
            <person name="Spiegel L."/>
            <person name="Nascimento L."/>
            <person name="Huang E."/>
            <person name="Preston R."/>
            <person name="Zutavern T."/>
            <person name="Palmer L."/>
            <person name="O'Shaughnessy A."/>
            <person name="Dike S."/>
            <person name="McCombie W.R."/>
            <person name="Minx P."/>
            <person name="Cordum H."/>
            <person name="Wilson R."/>
            <person name="Jin W."/>
            <person name="Lee H.R."/>
            <person name="Jiang J."/>
            <person name="Jackson S."/>
        </authorList>
    </citation>
    <scope>NUCLEOTIDE SEQUENCE [LARGE SCALE GENOMIC DNA]</scope>
    <source>
        <strain>cv. Nipponbare</strain>
    </source>
</reference>
<reference key="2">
    <citation type="journal article" date="2005" name="Nature">
        <title>The map-based sequence of the rice genome.</title>
        <authorList>
            <consortium name="International rice genome sequencing project (IRGSP)"/>
        </authorList>
    </citation>
    <scope>NUCLEOTIDE SEQUENCE [LARGE SCALE GENOMIC DNA]</scope>
    <source>
        <strain>cv. Nipponbare</strain>
    </source>
</reference>
<reference key="3">
    <citation type="journal article" date="2008" name="Nucleic Acids Res.">
        <title>The rice annotation project database (RAP-DB): 2008 update.</title>
        <authorList>
            <consortium name="The rice annotation project (RAP)"/>
        </authorList>
    </citation>
    <scope>GENOME REANNOTATION</scope>
    <source>
        <strain>cv. Nipponbare</strain>
    </source>
</reference>
<reference key="4">
    <citation type="journal article" date="2013" name="Rice">
        <title>Improvement of the Oryza sativa Nipponbare reference genome using next generation sequence and optical map data.</title>
        <authorList>
            <person name="Kawahara Y."/>
            <person name="de la Bastide M."/>
            <person name="Hamilton J.P."/>
            <person name="Kanamori H."/>
            <person name="McCombie W.R."/>
            <person name="Ouyang S."/>
            <person name="Schwartz D.C."/>
            <person name="Tanaka T."/>
            <person name="Wu J."/>
            <person name="Zhou S."/>
            <person name="Childs K.L."/>
            <person name="Davidson R.M."/>
            <person name="Lin H."/>
            <person name="Quesada-Ocampo L."/>
            <person name="Vaillancourt B."/>
            <person name="Sakai H."/>
            <person name="Lee S.S."/>
            <person name="Kim J."/>
            <person name="Numa H."/>
            <person name="Itoh T."/>
            <person name="Buell C.R."/>
            <person name="Matsumoto T."/>
        </authorList>
    </citation>
    <scope>GENOME REANNOTATION</scope>
    <source>
        <strain>cv. Nipponbare</strain>
    </source>
</reference>
<reference key="5">
    <citation type="journal article" date="2003" name="Science">
        <title>Collection, mapping, and annotation of over 28,000 cDNA clones from japonica rice.</title>
        <authorList>
            <consortium name="The rice full-length cDNA consortium"/>
        </authorList>
    </citation>
    <scope>NUCLEOTIDE SEQUENCE [LARGE SCALE MRNA]</scope>
    <source>
        <strain>cv. Nipponbare</strain>
    </source>
</reference>
<sequence length="276" mass="29683">MSKGPAPFLNIGKRAKDLLYKDYNFDQKFSLTTTSNSGLGLTATGVKIDELFIGDIQTQHKSGKTTVDVKIDSESRVSTTVTVDEALTGLKTSFSFRVPDQKSGKLDLQYLHDHFALNSTIGLTSTPLIELAATIGTNELSAGAEVGFDSTSASVTKYNSGICYNKHDFSAAVLLADKGETLKASYIHTFNETNGATVAAEVTHKLKTKENYFTIGSSHAIDSSTLLKTRFSNGGKVGVLCQHEWRPKSTVSISAEYDPKVVSSPSRFGVAIALKP</sequence>
<proteinExistence type="evidence at transcript level"/>